<keyword id="KW-1185">Reference proteome</keyword>
<keyword id="KW-0732">Signal</keyword>
<reference key="1">
    <citation type="journal article" date="1997" name="Nature">
        <title>The complete genome sequence of the hyperthermophilic, sulphate-reducing archaeon Archaeoglobus fulgidus.</title>
        <authorList>
            <person name="Klenk H.-P."/>
            <person name="Clayton R.A."/>
            <person name="Tomb J.-F."/>
            <person name="White O."/>
            <person name="Nelson K.E."/>
            <person name="Ketchum K.A."/>
            <person name="Dodson R.J."/>
            <person name="Gwinn M.L."/>
            <person name="Hickey E.K."/>
            <person name="Peterson J.D."/>
            <person name="Richardson D.L."/>
            <person name="Kerlavage A.R."/>
            <person name="Graham D.E."/>
            <person name="Kyrpides N.C."/>
            <person name="Fleischmann R.D."/>
            <person name="Quackenbush J."/>
            <person name="Lee N.H."/>
            <person name="Sutton G.G."/>
            <person name="Gill S.R."/>
            <person name="Kirkness E.F."/>
            <person name="Dougherty B.A."/>
            <person name="McKenney K."/>
            <person name="Adams M.D."/>
            <person name="Loftus B.J."/>
            <person name="Peterson S.N."/>
            <person name="Reich C.I."/>
            <person name="McNeil L.K."/>
            <person name="Badger J.H."/>
            <person name="Glodek A."/>
            <person name="Zhou L."/>
            <person name="Overbeek R."/>
            <person name="Gocayne J.D."/>
            <person name="Weidman J.F."/>
            <person name="McDonald L.A."/>
            <person name="Utterback T.R."/>
            <person name="Cotton M.D."/>
            <person name="Spriggs T."/>
            <person name="Artiach P."/>
            <person name="Kaine B.P."/>
            <person name="Sykes S.M."/>
            <person name="Sadow P.W."/>
            <person name="D'Andrea K.P."/>
            <person name="Bowman C."/>
            <person name="Fujii C."/>
            <person name="Garland S.A."/>
            <person name="Mason T.M."/>
            <person name="Olsen G.J."/>
            <person name="Fraser C.M."/>
            <person name="Smith H.O."/>
            <person name="Woese C.R."/>
            <person name="Venter J.C."/>
        </authorList>
    </citation>
    <scope>NUCLEOTIDE SEQUENCE [LARGE SCALE GENOMIC DNA]</scope>
    <source>
        <strain>ATCC 49558 / DSM 4304 / JCM 9628 / NBRC 100126 / VC-16</strain>
    </source>
</reference>
<organism>
    <name type="scientific">Archaeoglobus fulgidus (strain ATCC 49558 / DSM 4304 / JCM 9628 / NBRC 100126 / VC-16)</name>
    <dbReference type="NCBI Taxonomy" id="224325"/>
    <lineage>
        <taxon>Archaea</taxon>
        <taxon>Methanobacteriati</taxon>
        <taxon>Methanobacteriota</taxon>
        <taxon>Archaeoglobi</taxon>
        <taxon>Archaeoglobales</taxon>
        <taxon>Archaeoglobaceae</taxon>
        <taxon>Archaeoglobus</taxon>
    </lineage>
</organism>
<accession>O29721</accession>
<protein>
    <recommendedName>
        <fullName>Uncharacterized protein AF_0529</fullName>
    </recommendedName>
</protein>
<evidence type="ECO:0000255" key="1"/>
<gene>
    <name type="ordered locus">AF_0529</name>
</gene>
<sequence length="74" mass="8636">MMMTDLPENIRKTAVALLRLGEATAEDIAKITGRKRSTESYYLNLMADLKLVKKKKVGRKIYFIFNSRDQEKRQ</sequence>
<proteinExistence type="inferred from homology"/>
<feature type="signal peptide" evidence="1">
    <location>
        <begin position="1"/>
        <end position="25"/>
    </location>
</feature>
<feature type="chain" id="PRO_0000013641" description="Uncharacterized protein AF_0529">
    <location>
        <begin position="26"/>
        <end position="74"/>
    </location>
</feature>
<name>Y529_ARCFU</name>
<dbReference type="EMBL" id="AE000782">
    <property type="protein sequence ID" value="AAB90729.1"/>
    <property type="molecule type" value="Genomic_DNA"/>
</dbReference>
<dbReference type="PIR" id="A69316">
    <property type="entry name" value="A69316"/>
</dbReference>
<dbReference type="RefSeq" id="WP_010878036.1">
    <property type="nucleotide sequence ID" value="NC_000917.1"/>
</dbReference>
<dbReference type="SMR" id="O29721"/>
<dbReference type="STRING" id="224325.AF_0529"/>
<dbReference type="PaxDb" id="224325-AF_0529"/>
<dbReference type="EnsemblBacteria" id="AAB90729">
    <property type="protein sequence ID" value="AAB90729"/>
    <property type="gene ID" value="AF_0529"/>
</dbReference>
<dbReference type="KEGG" id="afu:AF_0529"/>
<dbReference type="eggNOG" id="arCOG07522">
    <property type="taxonomic scope" value="Archaea"/>
</dbReference>
<dbReference type="HOGENOM" id="CLU_2678653_0_0_2"/>
<dbReference type="OrthoDB" id="123711at2157"/>
<dbReference type="Proteomes" id="UP000002199">
    <property type="component" value="Chromosome"/>
</dbReference>
<dbReference type="GO" id="GO:0003700">
    <property type="term" value="F:DNA-binding transcription factor activity"/>
    <property type="evidence" value="ECO:0007669"/>
    <property type="project" value="InterPro"/>
</dbReference>
<dbReference type="Gene3D" id="1.10.10.10">
    <property type="entry name" value="Winged helix-like DNA-binding domain superfamily/Winged helix DNA-binding domain"/>
    <property type="match status" value="1"/>
</dbReference>
<dbReference type="InterPro" id="IPR001845">
    <property type="entry name" value="HTH_ArsR_DNA-bd_dom"/>
</dbReference>
<dbReference type="InterPro" id="IPR002831">
    <property type="entry name" value="Tscrpt_reg_TrmB_N"/>
</dbReference>
<dbReference type="InterPro" id="IPR036388">
    <property type="entry name" value="WH-like_DNA-bd_sf"/>
</dbReference>
<dbReference type="InterPro" id="IPR036390">
    <property type="entry name" value="WH_DNA-bd_sf"/>
</dbReference>
<dbReference type="Pfam" id="PF01978">
    <property type="entry name" value="TrmB"/>
    <property type="match status" value="1"/>
</dbReference>
<dbReference type="SUPFAM" id="SSF46785">
    <property type="entry name" value="Winged helix' DNA-binding domain"/>
    <property type="match status" value="1"/>
</dbReference>
<dbReference type="PROSITE" id="PS50987">
    <property type="entry name" value="HTH_ARSR_2"/>
    <property type="match status" value="1"/>
</dbReference>